<protein>
    <recommendedName>
        <fullName>Translation machinery-associated protein 22</fullName>
    </recommendedName>
</protein>
<name>DENR_PICGU</name>
<accession>A5DGV3</accession>
<keyword id="KW-0963">Cytoplasm</keyword>
<keyword id="KW-1185">Reference proteome</keyword>
<keyword id="KW-0687">Ribonucleoprotein</keyword>
<keyword id="KW-0689">Ribosomal protein</keyword>
<organism>
    <name type="scientific">Meyerozyma guilliermondii (strain ATCC 6260 / CBS 566 / DSM 6381 / JCM 1539 / NBRC 10279 / NRRL Y-324)</name>
    <name type="common">Yeast</name>
    <name type="synonym">Candida guilliermondii</name>
    <dbReference type="NCBI Taxonomy" id="294746"/>
    <lineage>
        <taxon>Eukaryota</taxon>
        <taxon>Fungi</taxon>
        <taxon>Dikarya</taxon>
        <taxon>Ascomycota</taxon>
        <taxon>Saccharomycotina</taxon>
        <taxon>Pichiomycetes</taxon>
        <taxon>Debaryomycetaceae</taxon>
        <taxon>Meyerozyma</taxon>
    </lineage>
</organism>
<sequence>MTEVEPKSVLYCGVCSFPPEFCEFGGSFKRCKEWLEQNDKELYEKLYSEDALANATSTLSIDKEQKIAKELEKKQAKEEAKQERELKKQLASKVTIKRIERNKRKHVIAISGLEVFDIDMKKLSKTFASKFATGASVTKNAEKKDEIIVQGDVSDEARAYIEKLLEEKGLNEVKVEQIDDKKKKKAAEAAEAAAAATGNKK</sequence>
<evidence type="ECO:0000250" key="1"/>
<evidence type="ECO:0000255" key="2">
    <source>
        <dbReference type="PROSITE-ProRule" id="PRU00200"/>
    </source>
</evidence>
<evidence type="ECO:0000305" key="3"/>
<dbReference type="EMBL" id="CH408157">
    <property type="protein sequence ID" value="EDK38406.1"/>
    <property type="molecule type" value="Genomic_DNA"/>
</dbReference>
<dbReference type="RefSeq" id="XP_001484775.1">
    <property type="nucleotide sequence ID" value="XM_001484725.1"/>
</dbReference>
<dbReference type="SMR" id="A5DGV3"/>
<dbReference type="FunCoup" id="A5DGV3">
    <property type="interactions" value="1191"/>
</dbReference>
<dbReference type="STRING" id="294746.A5DGV3"/>
<dbReference type="GeneID" id="5126840"/>
<dbReference type="KEGG" id="pgu:PGUG_02504"/>
<dbReference type="eggNOG" id="KOG3239">
    <property type="taxonomic scope" value="Eukaryota"/>
</dbReference>
<dbReference type="HOGENOM" id="CLU_073511_0_1_1"/>
<dbReference type="InParanoid" id="A5DGV3"/>
<dbReference type="OMA" id="EVFEIDM"/>
<dbReference type="OrthoDB" id="277199at2759"/>
<dbReference type="Proteomes" id="UP000001997">
    <property type="component" value="Unassembled WGS sequence"/>
</dbReference>
<dbReference type="GO" id="GO:0005737">
    <property type="term" value="C:cytoplasm"/>
    <property type="evidence" value="ECO:0007669"/>
    <property type="project" value="UniProtKB-SubCell"/>
</dbReference>
<dbReference type="GO" id="GO:1990904">
    <property type="term" value="C:ribonucleoprotein complex"/>
    <property type="evidence" value="ECO:0007669"/>
    <property type="project" value="UniProtKB-KW"/>
</dbReference>
<dbReference type="GO" id="GO:0005840">
    <property type="term" value="C:ribosome"/>
    <property type="evidence" value="ECO:0007669"/>
    <property type="project" value="UniProtKB-KW"/>
</dbReference>
<dbReference type="GO" id="GO:0003729">
    <property type="term" value="F:mRNA binding"/>
    <property type="evidence" value="ECO:0007669"/>
    <property type="project" value="TreeGrafter"/>
</dbReference>
<dbReference type="GO" id="GO:0003743">
    <property type="term" value="F:translation initiation factor activity"/>
    <property type="evidence" value="ECO:0007669"/>
    <property type="project" value="InterPro"/>
</dbReference>
<dbReference type="GO" id="GO:0001731">
    <property type="term" value="P:formation of translation preinitiation complex"/>
    <property type="evidence" value="ECO:0007669"/>
    <property type="project" value="TreeGrafter"/>
</dbReference>
<dbReference type="GO" id="GO:0002188">
    <property type="term" value="P:translation reinitiation"/>
    <property type="evidence" value="ECO:0007669"/>
    <property type="project" value="TreeGrafter"/>
</dbReference>
<dbReference type="CDD" id="cd11607">
    <property type="entry name" value="DENR_C"/>
    <property type="match status" value="1"/>
</dbReference>
<dbReference type="FunFam" id="3.30.780.10:FF:000013">
    <property type="entry name" value="Translation machinery-associated protein 22"/>
    <property type="match status" value="1"/>
</dbReference>
<dbReference type="Gene3D" id="3.30.780.10">
    <property type="entry name" value="SUI1-like domain"/>
    <property type="match status" value="1"/>
</dbReference>
<dbReference type="InterPro" id="IPR050318">
    <property type="entry name" value="DENR/SUI1_TIF"/>
</dbReference>
<dbReference type="InterPro" id="IPR046447">
    <property type="entry name" value="DENR_C"/>
</dbReference>
<dbReference type="InterPro" id="IPR005873">
    <property type="entry name" value="DENR_eukaryotes"/>
</dbReference>
<dbReference type="InterPro" id="IPR048517">
    <property type="entry name" value="DENR_N"/>
</dbReference>
<dbReference type="InterPro" id="IPR001950">
    <property type="entry name" value="SUI1"/>
</dbReference>
<dbReference type="InterPro" id="IPR036877">
    <property type="entry name" value="SUI1_dom_sf"/>
</dbReference>
<dbReference type="NCBIfam" id="TIGR01159">
    <property type="entry name" value="DRP1"/>
    <property type="match status" value="1"/>
</dbReference>
<dbReference type="PANTHER" id="PTHR12789:SF0">
    <property type="entry name" value="DENSITY-REGULATED PROTEIN"/>
    <property type="match status" value="1"/>
</dbReference>
<dbReference type="PANTHER" id="PTHR12789">
    <property type="entry name" value="DENSITY-REGULATED PROTEIN HOMOLOG"/>
    <property type="match status" value="1"/>
</dbReference>
<dbReference type="Pfam" id="PF21023">
    <property type="entry name" value="DENR_N"/>
    <property type="match status" value="1"/>
</dbReference>
<dbReference type="Pfam" id="PF01253">
    <property type="entry name" value="SUI1"/>
    <property type="match status" value="1"/>
</dbReference>
<dbReference type="SUPFAM" id="SSF55159">
    <property type="entry name" value="eIF1-like"/>
    <property type="match status" value="1"/>
</dbReference>
<dbReference type="PROSITE" id="PS50296">
    <property type="entry name" value="SUI1"/>
    <property type="match status" value="1"/>
</dbReference>
<proteinExistence type="inferred from homology"/>
<gene>
    <name type="primary">TMA22</name>
    <name type="ORF">PGUG_02504</name>
</gene>
<feature type="chain" id="PRO_0000320448" description="Translation machinery-associated protein 22">
    <location>
        <begin position="1"/>
        <end position="201"/>
    </location>
</feature>
<feature type="domain" description="SUI1" evidence="2">
    <location>
        <begin position="94"/>
        <end position="165"/>
    </location>
</feature>
<reference key="1">
    <citation type="journal article" date="2009" name="Nature">
        <title>Evolution of pathogenicity and sexual reproduction in eight Candida genomes.</title>
        <authorList>
            <person name="Butler G."/>
            <person name="Rasmussen M.D."/>
            <person name="Lin M.F."/>
            <person name="Santos M.A.S."/>
            <person name="Sakthikumar S."/>
            <person name="Munro C.A."/>
            <person name="Rheinbay E."/>
            <person name="Grabherr M."/>
            <person name="Forche A."/>
            <person name="Reedy J.L."/>
            <person name="Agrafioti I."/>
            <person name="Arnaud M.B."/>
            <person name="Bates S."/>
            <person name="Brown A.J.P."/>
            <person name="Brunke S."/>
            <person name="Costanzo M.C."/>
            <person name="Fitzpatrick D.A."/>
            <person name="de Groot P.W.J."/>
            <person name="Harris D."/>
            <person name="Hoyer L.L."/>
            <person name="Hube B."/>
            <person name="Klis F.M."/>
            <person name="Kodira C."/>
            <person name="Lennard N."/>
            <person name="Logue M.E."/>
            <person name="Martin R."/>
            <person name="Neiman A.M."/>
            <person name="Nikolaou E."/>
            <person name="Quail M.A."/>
            <person name="Quinn J."/>
            <person name="Santos M.C."/>
            <person name="Schmitzberger F.F."/>
            <person name="Sherlock G."/>
            <person name="Shah P."/>
            <person name="Silverstein K.A.T."/>
            <person name="Skrzypek M.S."/>
            <person name="Soll D."/>
            <person name="Staggs R."/>
            <person name="Stansfield I."/>
            <person name="Stumpf M.P.H."/>
            <person name="Sudbery P.E."/>
            <person name="Srikantha T."/>
            <person name="Zeng Q."/>
            <person name="Berman J."/>
            <person name="Berriman M."/>
            <person name="Heitman J."/>
            <person name="Gow N.A.R."/>
            <person name="Lorenz M.C."/>
            <person name="Birren B.W."/>
            <person name="Kellis M."/>
            <person name="Cuomo C.A."/>
        </authorList>
    </citation>
    <scope>NUCLEOTIDE SEQUENCE [LARGE SCALE GENOMIC DNA]</scope>
    <source>
        <strain>ATCC 6260 / CBS 566 / DSM 6381 / JCM 1539 / NBRC 10279 / NRRL Y-324</strain>
    </source>
</reference>
<comment type="subunit">
    <text evidence="1">Interacts with the 40S ribosomal subunit.</text>
</comment>
<comment type="subcellular location">
    <subcellularLocation>
        <location evidence="1">Cytoplasm</location>
    </subcellularLocation>
</comment>
<comment type="domain">
    <text>The SUI1 domain may be involved in RNA binding.</text>
</comment>
<comment type="similarity">
    <text evidence="3">Belongs to the DENR family.</text>
</comment>